<organism>
    <name type="scientific">Coxiella burnetii (strain Dugway 5J108-111)</name>
    <dbReference type="NCBI Taxonomy" id="434922"/>
    <lineage>
        <taxon>Bacteria</taxon>
        <taxon>Pseudomonadati</taxon>
        <taxon>Pseudomonadota</taxon>
        <taxon>Gammaproteobacteria</taxon>
        <taxon>Legionellales</taxon>
        <taxon>Coxiellaceae</taxon>
        <taxon>Coxiella</taxon>
    </lineage>
</organism>
<proteinExistence type="inferred from homology"/>
<dbReference type="EC" id="2.7.7.18" evidence="1"/>
<dbReference type="EMBL" id="CP000733">
    <property type="protein sequence ID" value="ABS78081.2"/>
    <property type="status" value="ALT_INIT"/>
    <property type="molecule type" value="Genomic_DNA"/>
</dbReference>
<dbReference type="SMR" id="A9KCQ7"/>
<dbReference type="KEGG" id="cbd:CBUD_1509"/>
<dbReference type="HOGENOM" id="CLU_069765_0_1_6"/>
<dbReference type="UniPathway" id="UPA00253">
    <property type="reaction ID" value="UER00332"/>
</dbReference>
<dbReference type="Proteomes" id="UP000008555">
    <property type="component" value="Chromosome"/>
</dbReference>
<dbReference type="GO" id="GO:0005524">
    <property type="term" value="F:ATP binding"/>
    <property type="evidence" value="ECO:0007669"/>
    <property type="project" value="UniProtKB-KW"/>
</dbReference>
<dbReference type="GO" id="GO:0004515">
    <property type="term" value="F:nicotinate-nucleotide adenylyltransferase activity"/>
    <property type="evidence" value="ECO:0007669"/>
    <property type="project" value="UniProtKB-UniRule"/>
</dbReference>
<dbReference type="GO" id="GO:0009435">
    <property type="term" value="P:NAD biosynthetic process"/>
    <property type="evidence" value="ECO:0007669"/>
    <property type="project" value="UniProtKB-UniRule"/>
</dbReference>
<dbReference type="CDD" id="cd02165">
    <property type="entry name" value="NMNAT"/>
    <property type="match status" value="1"/>
</dbReference>
<dbReference type="FunFam" id="3.40.50.620:FF:000427">
    <property type="entry name" value="Probable nicotinate-nucleotide adenylyltransferase"/>
    <property type="match status" value="1"/>
</dbReference>
<dbReference type="Gene3D" id="3.40.50.620">
    <property type="entry name" value="HUPs"/>
    <property type="match status" value="1"/>
</dbReference>
<dbReference type="HAMAP" id="MF_00244">
    <property type="entry name" value="NaMN_adenylyltr"/>
    <property type="match status" value="1"/>
</dbReference>
<dbReference type="InterPro" id="IPR004821">
    <property type="entry name" value="Cyt_trans-like"/>
</dbReference>
<dbReference type="InterPro" id="IPR005248">
    <property type="entry name" value="NadD/NMNAT"/>
</dbReference>
<dbReference type="InterPro" id="IPR014729">
    <property type="entry name" value="Rossmann-like_a/b/a_fold"/>
</dbReference>
<dbReference type="NCBIfam" id="TIGR00125">
    <property type="entry name" value="cyt_tran_rel"/>
    <property type="match status" value="1"/>
</dbReference>
<dbReference type="NCBIfam" id="TIGR00482">
    <property type="entry name" value="nicotinate (nicotinamide) nucleotide adenylyltransferase"/>
    <property type="match status" value="1"/>
</dbReference>
<dbReference type="NCBIfam" id="NF000839">
    <property type="entry name" value="PRK00071.1-1"/>
    <property type="match status" value="1"/>
</dbReference>
<dbReference type="PANTHER" id="PTHR39321">
    <property type="entry name" value="NICOTINATE-NUCLEOTIDE ADENYLYLTRANSFERASE-RELATED"/>
    <property type="match status" value="1"/>
</dbReference>
<dbReference type="PANTHER" id="PTHR39321:SF3">
    <property type="entry name" value="PHOSPHOPANTETHEINE ADENYLYLTRANSFERASE"/>
    <property type="match status" value="1"/>
</dbReference>
<dbReference type="Pfam" id="PF01467">
    <property type="entry name" value="CTP_transf_like"/>
    <property type="match status" value="1"/>
</dbReference>
<dbReference type="SUPFAM" id="SSF52374">
    <property type="entry name" value="Nucleotidylyl transferase"/>
    <property type="match status" value="1"/>
</dbReference>
<comment type="function">
    <text evidence="1">Catalyzes the reversible adenylation of nicotinate mononucleotide (NaMN) to nicotinic acid adenine dinucleotide (NaAD).</text>
</comment>
<comment type="catalytic activity">
    <reaction evidence="1">
        <text>nicotinate beta-D-ribonucleotide + ATP + H(+) = deamido-NAD(+) + diphosphate</text>
        <dbReference type="Rhea" id="RHEA:22860"/>
        <dbReference type="ChEBI" id="CHEBI:15378"/>
        <dbReference type="ChEBI" id="CHEBI:30616"/>
        <dbReference type="ChEBI" id="CHEBI:33019"/>
        <dbReference type="ChEBI" id="CHEBI:57502"/>
        <dbReference type="ChEBI" id="CHEBI:58437"/>
        <dbReference type="EC" id="2.7.7.18"/>
    </reaction>
</comment>
<comment type="pathway">
    <text evidence="1">Cofactor biosynthesis; NAD(+) biosynthesis; deamido-NAD(+) from nicotinate D-ribonucleotide: step 1/1.</text>
</comment>
<comment type="similarity">
    <text evidence="1">Belongs to the NadD family.</text>
</comment>
<comment type="sequence caution" evidence="2">
    <conflict type="erroneous initiation">
        <sequence resource="EMBL-CDS" id="ABS78081"/>
    </conflict>
</comment>
<evidence type="ECO:0000255" key="1">
    <source>
        <dbReference type="HAMAP-Rule" id="MF_00244"/>
    </source>
</evidence>
<evidence type="ECO:0000305" key="2"/>
<feature type="chain" id="PRO_1000078377" description="Probable nicotinate-nucleotide adenylyltransferase">
    <location>
        <begin position="1"/>
        <end position="215"/>
    </location>
</feature>
<keyword id="KW-0067">ATP-binding</keyword>
<keyword id="KW-0520">NAD</keyword>
<keyword id="KW-0547">Nucleotide-binding</keyword>
<keyword id="KW-0548">Nucleotidyltransferase</keyword>
<keyword id="KW-0662">Pyridine nucleotide biosynthesis</keyword>
<keyword id="KW-0808">Transferase</keyword>
<name>NADD_COXBN</name>
<gene>
    <name evidence="1" type="primary">nadD</name>
    <name type="ordered locus">CBUD_1509</name>
</gene>
<protein>
    <recommendedName>
        <fullName evidence="1">Probable nicotinate-nucleotide adenylyltransferase</fullName>
        <ecNumber evidence="1">2.7.7.18</ecNumber>
    </recommendedName>
    <alternativeName>
        <fullName evidence="1">Deamido-NAD(+) diphosphorylase</fullName>
    </alternativeName>
    <alternativeName>
        <fullName evidence="1">Deamido-NAD(+) pyrophosphorylase</fullName>
    </alternativeName>
    <alternativeName>
        <fullName evidence="1">Nicotinate mononucleotide adenylyltransferase</fullName>
        <shortName evidence="1">NaMN adenylyltransferase</shortName>
    </alternativeName>
</protein>
<reference key="1">
    <citation type="journal article" date="2009" name="Infect. Immun.">
        <title>Comparative genomics reveal extensive transposon-mediated genomic plasticity and diversity among potential effector proteins within the genus Coxiella.</title>
        <authorList>
            <person name="Beare P.A."/>
            <person name="Unsworth N."/>
            <person name="Andoh M."/>
            <person name="Voth D.E."/>
            <person name="Omsland A."/>
            <person name="Gilk S.D."/>
            <person name="Williams K.P."/>
            <person name="Sobral B.W."/>
            <person name="Kupko J.J. III"/>
            <person name="Porcella S.F."/>
            <person name="Samuel J.E."/>
            <person name="Heinzen R.A."/>
        </authorList>
    </citation>
    <scope>NUCLEOTIDE SEQUENCE [LARGE SCALE GENOMIC DNA]</scope>
    <source>
        <strain>Dugway 5J108-111</strain>
    </source>
</reference>
<sequence length="215" mass="24588">MFPLLGLFGGTFDPIHKGHLALANELIQKLPSLTEIQFIPSRQPPHRPSPLASPANRLEMIKRAIANQPNLILNDVEIKGNDISYTINTLKILRPLFLTHALCFILSTDAFADFKHWHQSSVILEYCHLIVVNRPNYRLPQQPWLSDLLSHHQTENAEDLGRFQFGKIFFQTLSPRPISATQIRHYLAKGDYEIVAPLLPKTVLAYIKAHKLYQQ</sequence>
<accession>A9KCQ7</accession>